<feature type="chain" id="PRO_0000209376" description="Regulatory ATPase RavA">
    <location>
        <begin position="1"/>
        <end position="498"/>
    </location>
</feature>
<feature type="binding site" evidence="1">
    <location>
        <position position="23"/>
    </location>
    <ligand>
        <name>ADP</name>
        <dbReference type="ChEBI" id="CHEBI:456216"/>
    </ligand>
</feature>
<feature type="binding site" evidence="1">
    <location>
        <position position="49"/>
    </location>
    <ligand>
        <name>ADP</name>
        <dbReference type="ChEBI" id="CHEBI:456216"/>
    </ligand>
</feature>
<feature type="binding site" evidence="1">
    <location>
        <position position="50"/>
    </location>
    <ligand>
        <name>ADP</name>
        <dbReference type="ChEBI" id="CHEBI:456216"/>
    </ligand>
</feature>
<feature type="binding site" evidence="1">
    <location>
        <position position="51"/>
    </location>
    <ligand>
        <name>ADP</name>
        <dbReference type="ChEBI" id="CHEBI:456216"/>
    </ligand>
</feature>
<feature type="binding site" evidence="1">
    <location>
        <position position="52"/>
    </location>
    <ligand>
        <name>ADP</name>
        <dbReference type="ChEBI" id="CHEBI:456216"/>
    </ligand>
</feature>
<feature type="binding site" evidence="1">
    <location>
        <position position="53"/>
    </location>
    <ligand>
        <name>ADP</name>
        <dbReference type="ChEBI" id="CHEBI:456216"/>
    </ligand>
</feature>
<feature type="binding site" evidence="1">
    <location>
        <position position="54"/>
    </location>
    <ligand>
        <name>ADP</name>
        <dbReference type="ChEBI" id="CHEBI:456216"/>
    </ligand>
</feature>
<feature type="binding site" evidence="1">
    <location>
        <position position="196"/>
    </location>
    <ligand>
        <name>ADP</name>
        <dbReference type="ChEBI" id="CHEBI:456216"/>
    </ligand>
</feature>
<dbReference type="EC" id="3.6.1.-" evidence="1"/>
<dbReference type="EMBL" id="AL513382">
    <property type="protein sequence ID" value="CAD03116.1"/>
    <property type="molecule type" value="Genomic_DNA"/>
</dbReference>
<dbReference type="EMBL" id="AE014613">
    <property type="protein sequence ID" value="AAO71137.1"/>
    <property type="molecule type" value="Genomic_DNA"/>
</dbReference>
<dbReference type="RefSeq" id="NP_458064.1">
    <property type="nucleotide sequence ID" value="NC_003198.1"/>
</dbReference>
<dbReference type="RefSeq" id="WP_000940993.1">
    <property type="nucleotide sequence ID" value="NZ_WSUR01000023.1"/>
</dbReference>
<dbReference type="SMR" id="Q8Z2R1"/>
<dbReference type="STRING" id="220341.gene:17587759"/>
<dbReference type="KEGG" id="stt:t3640"/>
<dbReference type="KEGG" id="sty:STY3899"/>
<dbReference type="PATRIC" id="fig|220341.7.peg.3979"/>
<dbReference type="eggNOG" id="COG0714">
    <property type="taxonomic scope" value="Bacteria"/>
</dbReference>
<dbReference type="HOGENOM" id="CLU_018678_1_0_6"/>
<dbReference type="OMA" id="HANAFEY"/>
<dbReference type="OrthoDB" id="1814213at2"/>
<dbReference type="Proteomes" id="UP000000541">
    <property type="component" value="Chromosome"/>
</dbReference>
<dbReference type="Proteomes" id="UP000002670">
    <property type="component" value="Chromosome"/>
</dbReference>
<dbReference type="GO" id="GO:0005737">
    <property type="term" value="C:cytoplasm"/>
    <property type="evidence" value="ECO:0007669"/>
    <property type="project" value="UniProtKB-SubCell"/>
</dbReference>
<dbReference type="GO" id="GO:0005524">
    <property type="term" value="F:ATP binding"/>
    <property type="evidence" value="ECO:0007669"/>
    <property type="project" value="UniProtKB-KW"/>
</dbReference>
<dbReference type="GO" id="GO:0016887">
    <property type="term" value="F:ATP hydrolysis activity"/>
    <property type="evidence" value="ECO:0007669"/>
    <property type="project" value="UniProtKB-UniRule"/>
</dbReference>
<dbReference type="CDD" id="cd00009">
    <property type="entry name" value="AAA"/>
    <property type="match status" value="1"/>
</dbReference>
<dbReference type="FunFam" id="3.40.50.300:FF:000410">
    <property type="entry name" value="ATPase RavA"/>
    <property type="match status" value="1"/>
</dbReference>
<dbReference type="Gene3D" id="1.20.58.1510">
    <property type="match status" value="1"/>
</dbReference>
<dbReference type="Gene3D" id="2.40.128.430">
    <property type="match status" value="1"/>
</dbReference>
<dbReference type="Gene3D" id="3.40.50.300">
    <property type="entry name" value="P-loop containing nucleotide triphosphate hydrolases"/>
    <property type="match status" value="1"/>
</dbReference>
<dbReference type="HAMAP" id="MF_01625">
    <property type="entry name" value="ATPase_RavA"/>
    <property type="match status" value="1"/>
</dbReference>
<dbReference type="InterPro" id="IPR003593">
    <property type="entry name" value="AAA+_ATPase"/>
</dbReference>
<dbReference type="InterPro" id="IPR023671">
    <property type="entry name" value="ATPase_RavA"/>
</dbReference>
<dbReference type="InterPro" id="IPR022547">
    <property type="entry name" value="ATPase_RavA_C"/>
</dbReference>
<dbReference type="InterPro" id="IPR045427">
    <property type="entry name" value="MoxR"/>
</dbReference>
<dbReference type="InterPro" id="IPR027417">
    <property type="entry name" value="P-loop_NTPase"/>
</dbReference>
<dbReference type="InterPro" id="IPR041538">
    <property type="entry name" value="RavA-like_AAA_lid"/>
</dbReference>
<dbReference type="InterPro" id="IPR050513">
    <property type="entry name" value="RavA_ATPases"/>
</dbReference>
<dbReference type="InterPro" id="IPR046898">
    <property type="entry name" value="RavA_LARA_dom"/>
</dbReference>
<dbReference type="InterPro" id="IPR046932">
    <property type="entry name" value="RavA_LARA_sf"/>
</dbReference>
<dbReference type="NCBIfam" id="NF010054">
    <property type="entry name" value="PRK13531.1"/>
    <property type="match status" value="1"/>
</dbReference>
<dbReference type="PANTHER" id="PTHR32204">
    <property type="entry name" value="ATPASE RAVA"/>
    <property type="match status" value="1"/>
</dbReference>
<dbReference type="PANTHER" id="PTHR32204:SF0">
    <property type="entry name" value="ATPASE RAVA"/>
    <property type="match status" value="1"/>
</dbReference>
<dbReference type="Pfam" id="PF17868">
    <property type="entry name" value="AAA_lid_8"/>
    <property type="match status" value="1"/>
</dbReference>
<dbReference type="Pfam" id="PF12592">
    <property type="entry name" value="ATPase_RavA_C"/>
    <property type="match status" value="1"/>
</dbReference>
<dbReference type="Pfam" id="PF20030">
    <property type="entry name" value="bpMoxR"/>
    <property type="match status" value="1"/>
</dbReference>
<dbReference type="Pfam" id="PF20265">
    <property type="entry name" value="LARA_dom"/>
    <property type="match status" value="1"/>
</dbReference>
<dbReference type="SMART" id="SM00382">
    <property type="entry name" value="AAA"/>
    <property type="match status" value="1"/>
</dbReference>
<dbReference type="SUPFAM" id="SSF52540">
    <property type="entry name" value="P-loop containing nucleoside triphosphate hydrolases"/>
    <property type="match status" value="1"/>
</dbReference>
<keyword id="KW-0067">ATP-binding</keyword>
<keyword id="KW-0143">Chaperone</keyword>
<keyword id="KW-0963">Cytoplasm</keyword>
<keyword id="KW-0378">Hydrolase</keyword>
<keyword id="KW-0547">Nucleotide-binding</keyword>
<proteinExistence type="inferred from homology"/>
<protein>
    <recommendedName>
        <fullName evidence="1">Regulatory ATPase RavA</fullName>
        <ecNumber evidence="1">3.6.1.-</ecNumber>
    </recommendedName>
    <alternativeName>
        <fullName evidence="1">Regulatory ATPase variant A</fullName>
    </alternativeName>
</protein>
<gene>
    <name evidence="1" type="primary">ravA</name>
    <name type="ordered locus">STY3899</name>
    <name type="ordered locus">t3640</name>
</gene>
<accession>Q8Z2R1</accession>
<accession>Q7C6J2</accession>
<organism>
    <name type="scientific">Salmonella typhi</name>
    <dbReference type="NCBI Taxonomy" id="90370"/>
    <lineage>
        <taxon>Bacteria</taxon>
        <taxon>Pseudomonadati</taxon>
        <taxon>Pseudomonadota</taxon>
        <taxon>Gammaproteobacteria</taxon>
        <taxon>Enterobacterales</taxon>
        <taxon>Enterobacteriaceae</taxon>
        <taxon>Salmonella</taxon>
    </lineage>
</organism>
<name>RAVA_SALTI</name>
<comment type="function">
    <text evidence="1">Component of the RavA-ViaA chaperone complex, which may act on the membrane to optimize the function of some of the respiratory chains. RavA functions as an ATPase.</text>
</comment>
<comment type="catalytic activity">
    <reaction evidence="1">
        <text>ATP + H2O = ADP + phosphate + H(+)</text>
        <dbReference type="Rhea" id="RHEA:13065"/>
        <dbReference type="ChEBI" id="CHEBI:15377"/>
        <dbReference type="ChEBI" id="CHEBI:15378"/>
        <dbReference type="ChEBI" id="CHEBI:30616"/>
        <dbReference type="ChEBI" id="CHEBI:43474"/>
        <dbReference type="ChEBI" id="CHEBI:456216"/>
    </reaction>
</comment>
<comment type="activity regulation">
    <text evidence="1">ATPase activity is stimulated by ViaA.</text>
</comment>
<comment type="subunit">
    <text evidence="1">Homohexamer. Interacts with ViaA.</text>
</comment>
<comment type="subcellular location">
    <subcellularLocation>
        <location evidence="1">Cytoplasm</location>
    </subcellularLocation>
</comment>
<comment type="similarity">
    <text evidence="1">Belongs to the RavA family.</text>
</comment>
<evidence type="ECO:0000255" key="1">
    <source>
        <dbReference type="HAMAP-Rule" id="MF_01625"/>
    </source>
</evidence>
<sequence>MAHPHLLAERISRLSSALEKGLYERSHAIRLCLLAALSGESVFLLGPPGIAKSLIARRLKFAFQRARAFEYLMTRFSTPEEVFGPLSIQALKDEGRYERLTTGYLPEAEIVFLDEIWKAGPAILNTLLTAINERHFRNGAFEEKIPMRLLVAASNELPEADSSLEALYDRMLIRLWLDKVQDKANFRSMLVSQQDESDNPVPASLQVSDEEYQQWQKDIGAISLPDPVFELIFTLRQQLDNLPNAPYVSDRRWKKAIRLLQASAFFSGRDAVAPIDLILLKDCLWYDAQSLNLMQQQLEILMTGHAWQQQAMLTRLGGIVQRRLQLQQQQSDKTAFTVIKEGGMFSRRPHYTLPPEASASTLTLLLQKPLKLHDMEVIHITFDRSALELWLTKGGEIRGKLNGIGFAQTLNMEVDNAQHPVVRDISLQGTRLALPGAAEDSMPAEIKQQLETLENDWRQQHTRFSEQQHCLFIHSDWLGRIEASLQDVGEQIRQAQQC</sequence>
<reference key="1">
    <citation type="journal article" date="2001" name="Nature">
        <title>Complete genome sequence of a multiple drug resistant Salmonella enterica serovar Typhi CT18.</title>
        <authorList>
            <person name="Parkhill J."/>
            <person name="Dougan G."/>
            <person name="James K.D."/>
            <person name="Thomson N.R."/>
            <person name="Pickard D."/>
            <person name="Wain J."/>
            <person name="Churcher C.M."/>
            <person name="Mungall K.L."/>
            <person name="Bentley S.D."/>
            <person name="Holden M.T.G."/>
            <person name="Sebaihia M."/>
            <person name="Baker S."/>
            <person name="Basham D."/>
            <person name="Brooks K."/>
            <person name="Chillingworth T."/>
            <person name="Connerton P."/>
            <person name="Cronin A."/>
            <person name="Davis P."/>
            <person name="Davies R.M."/>
            <person name="Dowd L."/>
            <person name="White N."/>
            <person name="Farrar J."/>
            <person name="Feltwell T."/>
            <person name="Hamlin N."/>
            <person name="Haque A."/>
            <person name="Hien T.T."/>
            <person name="Holroyd S."/>
            <person name="Jagels K."/>
            <person name="Krogh A."/>
            <person name="Larsen T.S."/>
            <person name="Leather S."/>
            <person name="Moule S."/>
            <person name="O'Gaora P."/>
            <person name="Parry C."/>
            <person name="Quail M.A."/>
            <person name="Rutherford K.M."/>
            <person name="Simmonds M."/>
            <person name="Skelton J."/>
            <person name="Stevens K."/>
            <person name="Whitehead S."/>
            <person name="Barrell B.G."/>
        </authorList>
    </citation>
    <scope>NUCLEOTIDE SEQUENCE [LARGE SCALE GENOMIC DNA]</scope>
    <source>
        <strain>CT18</strain>
    </source>
</reference>
<reference key="2">
    <citation type="journal article" date="2003" name="J. Bacteriol.">
        <title>Comparative genomics of Salmonella enterica serovar Typhi strains Ty2 and CT18.</title>
        <authorList>
            <person name="Deng W."/>
            <person name="Liou S.-R."/>
            <person name="Plunkett G. III"/>
            <person name="Mayhew G.F."/>
            <person name="Rose D.J."/>
            <person name="Burland V."/>
            <person name="Kodoyianni V."/>
            <person name="Schwartz D.C."/>
            <person name="Blattner F.R."/>
        </authorList>
    </citation>
    <scope>NUCLEOTIDE SEQUENCE [LARGE SCALE GENOMIC DNA]</scope>
    <source>
        <strain>ATCC 700931 / Ty2</strain>
    </source>
</reference>